<feature type="chain" id="PRO_0000417730" description="CRISPR-associated endoribonuclease Cas2">
    <location>
        <begin position="1"/>
        <end position="107"/>
    </location>
</feature>
<feature type="binding site" evidence="1">
    <location>
        <position position="6"/>
    </location>
    <ligand>
        <name>Mg(2+)</name>
        <dbReference type="ChEBI" id="CHEBI:18420"/>
        <note>catalytic</note>
    </ligand>
</feature>
<sequence length="107" mass="12346">MILMFDMPTDTAEERKAYRKFRKFLLSEGFIMHQFSVYSKLLLNNSANTAMIARLKENNPKKGNITLLTVTEKQFARMIYLNGERDTSIANSDSRLVFLGEAFPDET</sequence>
<dbReference type="EC" id="3.1.-.-" evidence="1"/>
<dbReference type="EMBL" id="AP010655">
    <property type="protein sequence ID" value="BAH87722.1"/>
    <property type="molecule type" value="Genomic_DNA"/>
</dbReference>
<dbReference type="SMR" id="C6SPT0"/>
<dbReference type="KEGG" id="smc:SmuNN2025_0696"/>
<dbReference type="HOGENOM" id="CLU_150500_1_1_9"/>
<dbReference type="GO" id="GO:0046872">
    <property type="term" value="F:metal ion binding"/>
    <property type="evidence" value="ECO:0007669"/>
    <property type="project" value="UniProtKB-UniRule"/>
</dbReference>
<dbReference type="GO" id="GO:0004521">
    <property type="term" value="F:RNA endonuclease activity"/>
    <property type="evidence" value="ECO:0007669"/>
    <property type="project" value="InterPro"/>
</dbReference>
<dbReference type="GO" id="GO:0051607">
    <property type="term" value="P:defense response to virus"/>
    <property type="evidence" value="ECO:0007669"/>
    <property type="project" value="UniProtKB-UniRule"/>
</dbReference>
<dbReference type="GO" id="GO:0043571">
    <property type="term" value="P:maintenance of CRISPR repeat elements"/>
    <property type="evidence" value="ECO:0007669"/>
    <property type="project" value="UniProtKB-UniRule"/>
</dbReference>
<dbReference type="CDD" id="cd09638">
    <property type="entry name" value="Cas2_I_II_III"/>
    <property type="match status" value="1"/>
</dbReference>
<dbReference type="HAMAP" id="MF_01471">
    <property type="entry name" value="Cas2"/>
    <property type="match status" value="1"/>
</dbReference>
<dbReference type="InterPro" id="IPR021127">
    <property type="entry name" value="CRISPR_associated_Cas2"/>
</dbReference>
<dbReference type="InterPro" id="IPR019199">
    <property type="entry name" value="Virulence_VapD/CRISPR_Cas2"/>
</dbReference>
<dbReference type="NCBIfam" id="TIGR01573">
    <property type="entry name" value="cas2"/>
    <property type="match status" value="1"/>
</dbReference>
<dbReference type="Pfam" id="PF09827">
    <property type="entry name" value="CRISPR_Cas2"/>
    <property type="match status" value="1"/>
</dbReference>
<dbReference type="SUPFAM" id="SSF143430">
    <property type="entry name" value="TTP0101/SSO1404-like"/>
    <property type="match status" value="1"/>
</dbReference>
<accession>C6SPT0</accession>
<comment type="function">
    <text evidence="1">CRISPR (clustered regularly interspaced short palindromic repeat), is an adaptive immune system that provides protection against mobile genetic elements (viruses, transposable elements and conjugative plasmids). CRISPR clusters contain sequences complementary to antecedent mobile elements and target invading nucleic acids. CRISPR clusters are transcribed and processed into CRISPR RNA (crRNA). Functions as a ssRNA-specific endoribonuclease. Involved in the integration of spacer DNA into the CRISPR cassette.</text>
</comment>
<comment type="cofactor">
    <cofactor evidence="1">
        <name>Mg(2+)</name>
        <dbReference type="ChEBI" id="CHEBI:18420"/>
    </cofactor>
</comment>
<comment type="subunit">
    <text evidence="1">Homodimer, forms a heterotetramer with a Cas1 homodimer.</text>
</comment>
<comment type="similarity">
    <text evidence="1">Belongs to the CRISPR-associated endoribonuclease Cas2 protein family.</text>
</comment>
<evidence type="ECO:0000255" key="1">
    <source>
        <dbReference type="HAMAP-Rule" id="MF_01471"/>
    </source>
</evidence>
<keyword id="KW-0051">Antiviral defense</keyword>
<keyword id="KW-0255">Endonuclease</keyword>
<keyword id="KW-0378">Hydrolase</keyword>
<keyword id="KW-0460">Magnesium</keyword>
<keyword id="KW-0479">Metal-binding</keyword>
<keyword id="KW-0540">Nuclease</keyword>
<protein>
    <recommendedName>
        <fullName evidence="1">CRISPR-associated endoribonuclease Cas2</fullName>
        <ecNumber evidence="1">3.1.-.-</ecNumber>
    </recommendedName>
</protein>
<reference key="1">
    <citation type="journal article" date="2009" name="BMC Genomics">
        <title>Comparative genomic analyses of Streptococcus mutans provide insights into chromosomal shuffling and species-specific content.</title>
        <authorList>
            <person name="Maruyama F."/>
            <person name="Kobata M."/>
            <person name="Kurokawa K."/>
            <person name="Nishida K."/>
            <person name="Sakurai A."/>
            <person name="Nakano K."/>
            <person name="Nomura R."/>
            <person name="Kawabata S."/>
            <person name="Ooshima T."/>
            <person name="Nakai K."/>
            <person name="Hattori M."/>
            <person name="Hamada S."/>
            <person name="Nakagawa I."/>
        </authorList>
    </citation>
    <scope>NUCLEOTIDE SEQUENCE [LARGE SCALE GENOMIC DNA]</scope>
    <source>
        <strain>NN2025</strain>
    </source>
</reference>
<gene>
    <name evidence="1" type="primary">cas2</name>
    <name type="ordered locus">SmuNN2025_0696</name>
</gene>
<name>CAS2_STRMN</name>
<organism>
    <name type="scientific">Streptococcus mutans serotype c (strain NN2025)</name>
    <dbReference type="NCBI Taxonomy" id="511691"/>
    <lineage>
        <taxon>Bacteria</taxon>
        <taxon>Bacillati</taxon>
        <taxon>Bacillota</taxon>
        <taxon>Bacilli</taxon>
        <taxon>Lactobacillales</taxon>
        <taxon>Streptococcaceae</taxon>
        <taxon>Streptococcus</taxon>
    </lineage>
</organism>
<proteinExistence type="inferred from homology"/>